<feature type="chain" id="PRO_1000088196" description="Fe/S biogenesis protein NfuA">
    <location>
        <begin position="1"/>
        <end position="193"/>
    </location>
</feature>
<feature type="binding site" evidence="1">
    <location>
        <position position="150"/>
    </location>
    <ligand>
        <name>[4Fe-4S] cluster</name>
        <dbReference type="ChEBI" id="CHEBI:49883"/>
    </ligand>
</feature>
<feature type="binding site" evidence="1">
    <location>
        <position position="153"/>
    </location>
    <ligand>
        <name>[4Fe-4S] cluster</name>
        <dbReference type="ChEBI" id="CHEBI:49883"/>
    </ligand>
</feature>
<comment type="function">
    <text evidence="1">Involved in iron-sulfur cluster biogenesis. Binds a 4Fe-4S cluster, can transfer this cluster to apoproteins, and thereby intervenes in the maturation of Fe/S proteins. Could also act as a scaffold/chaperone for damaged Fe/S proteins.</text>
</comment>
<comment type="cofactor">
    <cofactor evidence="1">
        <name>[4Fe-4S] cluster</name>
        <dbReference type="ChEBI" id="CHEBI:49883"/>
    </cofactor>
    <text evidence="1">Binds 1 [4Fe-4S] cluster per subunit. The cluster is presumably bound at the interface of two monomers.</text>
</comment>
<comment type="subunit">
    <text evidence="1">Homodimer.</text>
</comment>
<comment type="similarity">
    <text evidence="1">Belongs to the NfuA family.</text>
</comment>
<dbReference type="EMBL" id="CP000947">
    <property type="protein sequence ID" value="ACA32159.1"/>
    <property type="molecule type" value="Genomic_DNA"/>
</dbReference>
<dbReference type="RefSeq" id="WP_011609642.1">
    <property type="nucleotide sequence ID" value="NC_010519.1"/>
</dbReference>
<dbReference type="SMR" id="B0URV5"/>
<dbReference type="STRING" id="228400.HSM_0510"/>
<dbReference type="GeneID" id="31486789"/>
<dbReference type="KEGG" id="hsm:HSM_0510"/>
<dbReference type="HOGENOM" id="CLU_094569_0_0_6"/>
<dbReference type="GO" id="GO:0051539">
    <property type="term" value="F:4 iron, 4 sulfur cluster binding"/>
    <property type="evidence" value="ECO:0007669"/>
    <property type="project" value="UniProtKB-UniRule"/>
</dbReference>
<dbReference type="GO" id="GO:0005506">
    <property type="term" value="F:iron ion binding"/>
    <property type="evidence" value="ECO:0007669"/>
    <property type="project" value="InterPro"/>
</dbReference>
<dbReference type="GO" id="GO:0016226">
    <property type="term" value="P:iron-sulfur cluster assembly"/>
    <property type="evidence" value="ECO:0007669"/>
    <property type="project" value="UniProtKB-UniRule"/>
</dbReference>
<dbReference type="GO" id="GO:0051604">
    <property type="term" value="P:protein maturation"/>
    <property type="evidence" value="ECO:0007669"/>
    <property type="project" value="UniProtKB-UniRule"/>
</dbReference>
<dbReference type="Gene3D" id="3.30.300.130">
    <property type="entry name" value="Fe-S cluster assembly (FSCA)"/>
    <property type="match status" value="1"/>
</dbReference>
<dbReference type="Gene3D" id="2.60.300.12">
    <property type="entry name" value="HesB-like domain"/>
    <property type="match status" value="1"/>
</dbReference>
<dbReference type="HAMAP" id="MF_01637">
    <property type="entry name" value="Fe_S_biogen_NfuA"/>
    <property type="match status" value="1"/>
</dbReference>
<dbReference type="InterPro" id="IPR017726">
    <property type="entry name" value="Fe/S_biogenesis_protein_NfuA"/>
</dbReference>
<dbReference type="InterPro" id="IPR000361">
    <property type="entry name" value="FeS_biogenesis"/>
</dbReference>
<dbReference type="InterPro" id="IPR034904">
    <property type="entry name" value="FSCA_dom_sf"/>
</dbReference>
<dbReference type="InterPro" id="IPR035903">
    <property type="entry name" value="HesB-like_dom_sf"/>
</dbReference>
<dbReference type="InterPro" id="IPR001075">
    <property type="entry name" value="NIF_FeS_clus_asmbl_NifU_C"/>
</dbReference>
<dbReference type="NCBIfam" id="NF008392">
    <property type="entry name" value="PRK11190.1"/>
    <property type="match status" value="1"/>
</dbReference>
<dbReference type="NCBIfam" id="TIGR03341">
    <property type="entry name" value="YhgI_GntY"/>
    <property type="match status" value="1"/>
</dbReference>
<dbReference type="PANTHER" id="PTHR11178:SF51">
    <property type="entry name" value="FE_S BIOGENESIS PROTEIN NFUA"/>
    <property type="match status" value="1"/>
</dbReference>
<dbReference type="PANTHER" id="PTHR11178">
    <property type="entry name" value="IRON-SULFUR CLUSTER SCAFFOLD PROTEIN NFU-RELATED"/>
    <property type="match status" value="1"/>
</dbReference>
<dbReference type="Pfam" id="PF01521">
    <property type="entry name" value="Fe-S_biosyn"/>
    <property type="match status" value="1"/>
</dbReference>
<dbReference type="Pfam" id="PF01106">
    <property type="entry name" value="NifU"/>
    <property type="match status" value="1"/>
</dbReference>
<dbReference type="SUPFAM" id="SSF117916">
    <property type="entry name" value="Fe-S cluster assembly (FSCA) domain-like"/>
    <property type="match status" value="1"/>
</dbReference>
<dbReference type="SUPFAM" id="SSF89360">
    <property type="entry name" value="HesB-like domain"/>
    <property type="match status" value="1"/>
</dbReference>
<evidence type="ECO:0000255" key="1">
    <source>
        <dbReference type="HAMAP-Rule" id="MF_01637"/>
    </source>
</evidence>
<reference key="1">
    <citation type="submission" date="2008-02" db="EMBL/GenBank/DDBJ databases">
        <title>Complete sequence of Haemophilus somnus 2336.</title>
        <authorList>
            <consortium name="US DOE Joint Genome Institute"/>
            <person name="Siddaramappa S."/>
            <person name="Duncan A.J."/>
            <person name="Challacombe J.F."/>
            <person name="Rainey D."/>
            <person name="Gillaspy A.F."/>
            <person name="Carson M."/>
            <person name="Gipson J."/>
            <person name="Gipson M."/>
            <person name="Bruce D."/>
            <person name="Detter J.C."/>
            <person name="Han C.S."/>
            <person name="Land M."/>
            <person name="Tapia R."/>
            <person name="Thompson L.S."/>
            <person name="Orvis J."/>
            <person name="Zaitshik J."/>
            <person name="Barnes G."/>
            <person name="Brettin T.S."/>
            <person name="Dyer D.W."/>
            <person name="Inzana T.J."/>
        </authorList>
    </citation>
    <scope>NUCLEOTIDE SEQUENCE [LARGE SCALE GENOMIC DNA]</scope>
    <source>
        <strain>2336</strain>
    </source>
</reference>
<protein>
    <recommendedName>
        <fullName evidence="1">Fe/S biogenesis protein NfuA</fullName>
    </recommendedName>
</protein>
<keyword id="KW-0004">4Fe-4S</keyword>
<keyword id="KW-0408">Iron</keyword>
<keyword id="KW-0411">Iron-sulfur</keyword>
<keyword id="KW-0479">Metal-binding</keyword>
<name>NFUA_HISS2</name>
<organism>
    <name type="scientific">Histophilus somni (strain 2336)</name>
    <name type="common">Haemophilus somnus</name>
    <dbReference type="NCBI Taxonomy" id="228400"/>
    <lineage>
        <taxon>Bacteria</taxon>
        <taxon>Pseudomonadati</taxon>
        <taxon>Pseudomonadota</taxon>
        <taxon>Gammaproteobacteria</taxon>
        <taxon>Pasteurellales</taxon>
        <taxon>Pasteurellaceae</taxon>
        <taxon>Histophilus</taxon>
    </lineage>
</organism>
<sequence>MQITISEAAQAHFRRLLDQQEEGTNIRIFVVNPGSPNAECGVSYCPKNAVETTDHEIKYSEFSAFIDEVSFPFLEDAEIDYITEEMGSQLTLKAPNAKMRKVADDAPLIERVEYAIQTQINPQLAGHGGHITLIEITKDGKAILQFGGGCNGCSMVDVTLKDGIEKQLLAMFADELTGVKDVTEHQRGEHSYY</sequence>
<accession>B0URV5</accession>
<gene>
    <name evidence="1" type="primary">nfuA</name>
    <name type="ordered locus">HSM_0510</name>
</gene>
<proteinExistence type="inferred from homology"/>